<organism>
    <name type="scientific">Campylobacter jejuni (strain RM1221)</name>
    <dbReference type="NCBI Taxonomy" id="195099"/>
    <lineage>
        <taxon>Bacteria</taxon>
        <taxon>Pseudomonadati</taxon>
        <taxon>Campylobacterota</taxon>
        <taxon>Epsilonproteobacteria</taxon>
        <taxon>Campylobacterales</taxon>
        <taxon>Campylobacteraceae</taxon>
        <taxon>Campylobacter</taxon>
    </lineage>
</organism>
<sequence>MEKEVIAYLDNETIIDSQSVKNTNLKEIYFDNSKESLEVIRHSCAHLMAQAIKSLYPEAKFFVGPVIEDGFYYDFRVESKIGEEDLVKIEKKMKELAEAKIEISKYEITKNEALAKFQNDDLKQEVLLRIPDGAVSIYKQGEFEDLCRGPHVPNTKFLRFFKLTRVAGAYLDGDEKREMLTRIYGTAFADKESLKEYLTIIEEAKKRDHRKLGTELKLFTFDDEIGGGLPIWLSNGARLRSKLEHMLYKIHRLRGYEPVRGPELLKADAWKISGHYANYKENMYFTQIDEQEYGIKPMNCVGHIKIYQSDVRSYRDLPLKFFEYGVVHRHEKSGVLHGLFRVREFTQDDAHIFCMPSQIKEQVLEILAFVDNLMKLFDFSYEMEISTKPEKAIGDDEIWEVATKALKEALDEQGLKYGIDEGGGAFYGPKIDIKITDALKRKWQCGTIQVDFNLPSRFKLEYTDSDNEKKQPVMLHRAILGSFERFIGILTEHCAGEFPFFIAPTAVGIVPIGEAHIAYAKEIQKELLELNIDSEVYEKNESLSKKIRIAEKQKLPMILVLGDDEVAKRSVALRDRRAKEQKNLSLDEFIKLVKEKMSEVHF</sequence>
<name>SYT_CAMJR</name>
<reference key="1">
    <citation type="journal article" date="2005" name="PLoS Biol.">
        <title>Major structural differences and novel potential virulence mechanisms from the genomes of multiple Campylobacter species.</title>
        <authorList>
            <person name="Fouts D.E."/>
            <person name="Mongodin E.F."/>
            <person name="Mandrell R.E."/>
            <person name="Miller W.G."/>
            <person name="Rasko D.A."/>
            <person name="Ravel J."/>
            <person name="Brinkac L.M."/>
            <person name="DeBoy R.T."/>
            <person name="Parker C.T."/>
            <person name="Daugherty S.C."/>
            <person name="Dodson R.J."/>
            <person name="Durkin A.S."/>
            <person name="Madupu R."/>
            <person name="Sullivan S.A."/>
            <person name="Shetty J.U."/>
            <person name="Ayodeji M.A."/>
            <person name="Shvartsbeyn A."/>
            <person name="Schatz M.C."/>
            <person name="Badger J.H."/>
            <person name="Fraser C.M."/>
            <person name="Nelson K.E."/>
        </authorList>
    </citation>
    <scope>NUCLEOTIDE SEQUENCE [LARGE SCALE GENOMIC DNA]</scope>
    <source>
        <strain>RM1221</strain>
    </source>
</reference>
<evidence type="ECO:0000255" key="1">
    <source>
        <dbReference type="HAMAP-Rule" id="MF_00184"/>
    </source>
</evidence>
<gene>
    <name evidence="1" type="primary">thrS</name>
    <name type="ordered locus">CJE0199</name>
</gene>
<accession>Q5HWW3</accession>
<comment type="function">
    <text evidence="1">Catalyzes the attachment of threonine to tRNA(Thr) in a two-step reaction: L-threonine is first activated by ATP to form Thr-AMP and then transferred to the acceptor end of tRNA(Thr). Also edits incorrectly charged L-seryl-tRNA(Thr).</text>
</comment>
<comment type="catalytic activity">
    <reaction evidence="1">
        <text>tRNA(Thr) + L-threonine + ATP = L-threonyl-tRNA(Thr) + AMP + diphosphate + H(+)</text>
        <dbReference type="Rhea" id="RHEA:24624"/>
        <dbReference type="Rhea" id="RHEA-COMP:9670"/>
        <dbReference type="Rhea" id="RHEA-COMP:9704"/>
        <dbReference type="ChEBI" id="CHEBI:15378"/>
        <dbReference type="ChEBI" id="CHEBI:30616"/>
        <dbReference type="ChEBI" id="CHEBI:33019"/>
        <dbReference type="ChEBI" id="CHEBI:57926"/>
        <dbReference type="ChEBI" id="CHEBI:78442"/>
        <dbReference type="ChEBI" id="CHEBI:78534"/>
        <dbReference type="ChEBI" id="CHEBI:456215"/>
        <dbReference type="EC" id="6.1.1.3"/>
    </reaction>
</comment>
<comment type="cofactor">
    <cofactor evidence="1">
        <name>Zn(2+)</name>
        <dbReference type="ChEBI" id="CHEBI:29105"/>
    </cofactor>
    <text evidence="1">Binds 1 zinc ion per subunit.</text>
</comment>
<comment type="subunit">
    <text evidence="1">Homodimer.</text>
</comment>
<comment type="subcellular location">
    <subcellularLocation>
        <location evidence="1">Cytoplasm</location>
    </subcellularLocation>
</comment>
<comment type="similarity">
    <text evidence="1">Belongs to the class-II aminoacyl-tRNA synthetase family.</text>
</comment>
<dbReference type="EC" id="6.1.1.3" evidence="1"/>
<dbReference type="EMBL" id="CP000025">
    <property type="protein sequence ID" value="AAW34793.1"/>
    <property type="molecule type" value="Genomic_DNA"/>
</dbReference>
<dbReference type="RefSeq" id="WP_002867122.1">
    <property type="nucleotide sequence ID" value="NC_003912.7"/>
</dbReference>
<dbReference type="SMR" id="Q5HWW3"/>
<dbReference type="KEGG" id="cjr:CJE0199"/>
<dbReference type="HOGENOM" id="CLU_008554_0_1_7"/>
<dbReference type="GO" id="GO:0005829">
    <property type="term" value="C:cytosol"/>
    <property type="evidence" value="ECO:0007669"/>
    <property type="project" value="TreeGrafter"/>
</dbReference>
<dbReference type="GO" id="GO:0005524">
    <property type="term" value="F:ATP binding"/>
    <property type="evidence" value="ECO:0007669"/>
    <property type="project" value="UniProtKB-UniRule"/>
</dbReference>
<dbReference type="GO" id="GO:0046872">
    <property type="term" value="F:metal ion binding"/>
    <property type="evidence" value="ECO:0007669"/>
    <property type="project" value="UniProtKB-KW"/>
</dbReference>
<dbReference type="GO" id="GO:0004829">
    <property type="term" value="F:threonine-tRNA ligase activity"/>
    <property type="evidence" value="ECO:0007669"/>
    <property type="project" value="UniProtKB-UniRule"/>
</dbReference>
<dbReference type="GO" id="GO:0000049">
    <property type="term" value="F:tRNA binding"/>
    <property type="evidence" value="ECO:0007669"/>
    <property type="project" value="UniProtKB-KW"/>
</dbReference>
<dbReference type="GO" id="GO:0006435">
    <property type="term" value="P:threonyl-tRNA aminoacylation"/>
    <property type="evidence" value="ECO:0007669"/>
    <property type="project" value="UniProtKB-UniRule"/>
</dbReference>
<dbReference type="CDD" id="cd00860">
    <property type="entry name" value="ThrRS_anticodon"/>
    <property type="match status" value="1"/>
</dbReference>
<dbReference type="CDD" id="cd00771">
    <property type="entry name" value="ThrRS_core"/>
    <property type="match status" value="1"/>
</dbReference>
<dbReference type="FunFam" id="3.30.930.10:FF:000019">
    <property type="entry name" value="Threonine--tRNA ligase"/>
    <property type="match status" value="1"/>
</dbReference>
<dbReference type="FunFam" id="3.30.980.10:FF:000005">
    <property type="entry name" value="Threonyl-tRNA synthetase, mitochondrial"/>
    <property type="match status" value="1"/>
</dbReference>
<dbReference type="Gene3D" id="3.30.54.20">
    <property type="match status" value="1"/>
</dbReference>
<dbReference type="Gene3D" id="3.40.50.800">
    <property type="entry name" value="Anticodon-binding domain"/>
    <property type="match status" value="1"/>
</dbReference>
<dbReference type="Gene3D" id="3.30.930.10">
    <property type="entry name" value="Bira Bifunctional Protein, Domain 2"/>
    <property type="match status" value="1"/>
</dbReference>
<dbReference type="Gene3D" id="3.30.980.10">
    <property type="entry name" value="Threonyl-trna Synthetase, Chain A, domain 2"/>
    <property type="match status" value="1"/>
</dbReference>
<dbReference type="HAMAP" id="MF_00184">
    <property type="entry name" value="Thr_tRNA_synth"/>
    <property type="match status" value="1"/>
</dbReference>
<dbReference type="InterPro" id="IPR002314">
    <property type="entry name" value="aa-tRNA-synt_IIb"/>
</dbReference>
<dbReference type="InterPro" id="IPR006195">
    <property type="entry name" value="aa-tRNA-synth_II"/>
</dbReference>
<dbReference type="InterPro" id="IPR045864">
    <property type="entry name" value="aa-tRNA-synth_II/BPL/LPL"/>
</dbReference>
<dbReference type="InterPro" id="IPR004154">
    <property type="entry name" value="Anticodon-bd"/>
</dbReference>
<dbReference type="InterPro" id="IPR036621">
    <property type="entry name" value="Anticodon-bd_dom_sf"/>
</dbReference>
<dbReference type="InterPro" id="IPR002320">
    <property type="entry name" value="Thr-tRNA-ligase_IIa"/>
</dbReference>
<dbReference type="InterPro" id="IPR018163">
    <property type="entry name" value="Thr/Ala-tRNA-synth_IIc_edit"/>
</dbReference>
<dbReference type="InterPro" id="IPR047246">
    <property type="entry name" value="ThrRS_anticodon"/>
</dbReference>
<dbReference type="InterPro" id="IPR033728">
    <property type="entry name" value="ThrRS_core"/>
</dbReference>
<dbReference type="InterPro" id="IPR012947">
    <property type="entry name" value="tRNA_SAD"/>
</dbReference>
<dbReference type="NCBIfam" id="TIGR00418">
    <property type="entry name" value="thrS"/>
    <property type="match status" value="1"/>
</dbReference>
<dbReference type="PANTHER" id="PTHR11451:SF44">
    <property type="entry name" value="THREONINE--TRNA LIGASE, CHLOROPLASTIC_MITOCHONDRIAL 2"/>
    <property type="match status" value="1"/>
</dbReference>
<dbReference type="PANTHER" id="PTHR11451">
    <property type="entry name" value="THREONINE-TRNA LIGASE"/>
    <property type="match status" value="1"/>
</dbReference>
<dbReference type="Pfam" id="PF03129">
    <property type="entry name" value="HGTP_anticodon"/>
    <property type="match status" value="1"/>
</dbReference>
<dbReference type="Pfam" id="PF00587">
    <property type="entry name" value="tRNA-synt_2b"/>
    <property type="match status" value="1"/>
</dbReference>
<dbReference type="Pfam" id="PF07973">
    <property type="entry name" value="tRNA_SAD"/>
    <property type="match status" value="1"/>
</dbReference>
<dbReference type="PRINTS" id="PR01047">
    <property type="entry name" value="TRNASYNTHTHR"/>
</dbReference>
<dbReference type="SMART" id="SM00863">
    <property type="entry name" value="tRNA_SAD"/>
    <property type="match status" value="1"/>
</dbReference>
<dbReference type="SUPFAM" id="SSF52954">
    <property type="entry name" value="Class II aaRS ABD-related"/>
    <property type="match status" value="1"/>
</dbReference>
<dbReference type="SUPFAM" id="SSF55681">
    <property type="entry name" value="Class II aaRS and biotin synthetases"/>
    <property type="match status" value="1"/>
</dbReference>
<dbReference type="SUPFAM" id="SSF55186">
    <property type="entry name" value="ThrRS/AlaRS common domain"/>
    <property type="match status" value="1"/>
</dbReference>
<dbReference type="PROSITE" id="PS50862">
    <property type="entry name" value="AA_TRNA_LIGASE_II"/>
    <property type="match status" value="1"/>
</dbReference>
<proteinExistence type="inferred from homology"/>
<feature type="chain" id="PRO_0000100956" description="Threonine--tRNA ligase">
    <location>
        <begin position="1"/>
        <end position="602"/>
    </location>
</feature>
<feature type="region of interest" description="Catalytic" evidence="1">
    <location>
        <begin position="208"/>
        <end position="499"/>
    </location>
</feature>
<feature type="binding site" evidence="1">
    <location>
        <position position="300"/>
    </location>
    <ligand>
        <name>Zn(2+)</name>
        <dbReference type="ChEBI" id="CHEBI:29105"/>
    </ligand>
</feature>
<feature type="binding site" evidence="1">
    <location>
        <position position="351"/>
    </location>
    <ligand>
        <name>Zn(2+)</name>
        <dbReference type="ChEBI" id="CHEBI:29105"/>
    </ligand>
</feature>
<feature type="binding site" evidence="1">
    <location>
        <position position="476"/>
    </location>
    <ligand>
        <name>Zn(2+)</name>
        <dbReference type="ChEBI" id="CHEBI:29105"/>
    </ligand>
</feature>
<keyword id="KW-0030">Aminoacyl-tRNA synthetase</keyword>
<keyword id="KW-0067">ATP-binding</keyword>
<keyword id="KW-0963">Cytoplasm</keyword>
<keyword id="KW-0436">Ligase</keyword>
<keyword id="KW-0479">Metal-binding</keyword>
<keyword id="KW-0547">Nucleotide-binding</keyword>
<keyword id="KW-0648">Protein biosynthesis</keyword>
<keyword id="KW-0694">RNA-binding</keyword>
<keyword id="KW-0820">tRNA-binding</keyword>
<keyword id="KW-0862">Zinc</keyword>
<protein>
    <recommendedName>
        <fullName evidence="1">Threonine--tRNA ligase</fullName>
        <ecNumber evidence="1">6.1.1.3</ecNumber>
    </recommendedName>
    <alternativeName>
        <fullName evidence="1">Threonyl-tRNA synthetase</fullName>
        <shortName evidence="1">ThrRS</shortName>
    </alternativeName>
</protein>